<accession>Q0TGV6</accession>
<protein>
    <recommendedName>
        <fullName evidence="1">Arginine--tRNA ligase</fullName>
        <ecNumber evidence="1">6.1.1.19</ecNumber>
    </recommendedName>
    <alternativeName>
        <fullName evidence="1">Arginyl-tRNA synthetase</fullName>
        <shortName evidence="1">ArgRS</shortName>
    </alternativeName>
</protein>
<comment type="catalytic activity">
    <reaction evidence="1">
        <text>tRNA(Arg) + L-arginine + ATP = L-arginyl-tRNA(Arg) + AMP + diphosphate</text>
        <dbReference type="Rhea" id="RHEA:20301"/>
        <dbReference type="Rhea" id="RHEA-COMP:9658"/>
        <dbReference type="Rhea" id="RHEA-COMP:9673"/>
        <dbReference type="ChEBI" id="CHEBI:30616"/>
        <dbReference type="ChEBI" id="CHEBI:32682"/>
        <dbReference type="ChEBI" id="CHEBI:33019"/>
        <dbReference type="ChEBI" id="CHEBI:78442"/>
        <dbReference type="ChEBI" id="CHEBI:78513"/>
        <dbReference type="ChEBI" id="CHEBI:456215"/>
        <dbReference type="EC" id="6.1.1.19"/>
    </reaction>
</comment>
<comment type="subunit">
    <text evidence="1">Monomer.</text>
</comment>
<comment type="subcellular location">
    <subcellularLocation>
        <location evidence="1">Cytoplasm</location>
    </subcellularLocation>
</comment>
<comment type="similarity">
    <text evidence="1">Belongs to the class-I aminoacyl-tRNA synthetase family.</text>
</comment>
<keyword id="KW-0030">Aminoacyl-tRNA synthetase</keyword>
<keyword id="KW-0067">ATP-binding</keyword>
<keyword id="KW-0963">Cytoplasm</keyword>
<keyword id="KW-0436">Ligase</keyword>
<keyword id="KW-0547">Nucleotide-binding</keyword>
<keyword id="KW-0648">Protein biosynthesis</keyword>
<feature type="chain" id="PRO_1000018024" description="Arginine--tRNA ligase">
    <location>
        <begin position="1"/>
        <end position="577"/>
    </location>
</feature>
<feature type="short sequence motif" description="'HIGH' region">
    <location>
        <begin position="122"/>
        <end position="132"/>
    </location>
</feature>
<organism>
    <name type="scientific">Escherichia coli O6:K15:H31 (strain 536 / UPEC)</name>
    <dbReference type="NCBI Taxonomy" id="362663"/>
    <lineage>
        <taxon>Bacteria</taxon>
        <taxon>Pseudomonadati</taxon>
        <taxon>Pseudomonadota</taxon>
        <taxon>Gammaproteobacteria</taxon>
        <taxon>Enterobacterales</taxon>
        <taxon>Enterobacteriaceae</taxon>
        <taxon>Escherichia</taxon>
    </lineage>
</organism>
<sequence length="577" mass="64712">MNIQALLSEKVRQAMIAAGAPADCEPQVRQSAKVQFGDYQANGMMAVAKKLGMAPRQLAEQVLTHLDLNGIASKVEIAGPGFINIFLDPAFLAEHVQQALASDRLGVAMPEKQTIVVDYSAPNVAKEMHVGHLRSTIIGDAAVRTLEFLGHKVIRANHVGDWGTQFGMLIAWLEKQQQENAGEMELADLEGFYRDAKKHYDEDEEFAERARNYVVKLQSGDEYFREMWRKLVDITMTQNQITYDRLNVTLTRDDVMGESLYNPMLPGIVADLKAKGLAVESEGATVVFLDEFKNKEGEPMGVIIQKKDGGYLYTTTDIACAKYRYETLHADRVLYYIDSRQHQHLMQAWAIVRKAGYVPESVPLEHHMFGMMLGKDGKPFKTRAGGTVKLADLLDEALERARRLVAEKNPDMPADELEKLANAVGIGAVKYADLSKNRTTDYIFDWDNMLAFEGNTAPYMQYAYTRVLSVFRKAEINEEQLAAAPVIIREDREAQLAARLLQFEETLTVVAREGTPHVMCAYLYDLAGLFSGFYEHCPILSAENEEVRNSRLKLAQLTAKTLKLGLDTLGIETVERM</sequence>
<gene>
    <name evidence="1" type="primary">argS</name>
    <name type="ordered locus">ECP_1822</name>
</gene>
<reference key="1">
    <citation type="journal article" date="2006" name="Mol. Microbiol.">
        <title>Role of pathogenicity island-associated integrases in the genome plasticity of uropathogenic Escherichia coli strain 536.</title>
        <authorList>
            <person name="Hochhut B."/>
            <person name="Wilde C."/>
            <person name="Balling G."/>
            <person name="Middendorf B."/>
            <person name="Dobrindt U."/>
            <person name="Brzuszkiewicz E."/>
            <person name="Gottschalk G."/>
            <person name="Carniel E."/>
            <person name="Hacker J."/>
        </authorList>
    </citation>
    <scope>NUCLEOTIDE SEQUENCE [LARGE SCALE GENOMIC DNA]</scope>
    <source>
        <strain>536 / UPEC</strain>
    </source>
</reference>
<name>SYR_ECOL5</name>
<evidence type="ECO:0000255" key="1">
    <source>
        <dbReference type="HAMAP-Rule" id="MF_00123"/>
    </source>
</evidence>
<dbReference type="EC" id="6.1.1.19" evidence="1"/>
<dbReference type="EMBL" id="CP000247">
    <property type="protein sequence ID" value="ABG69823.1"/>
    <property type="molecule type" value="Genomic_DNA"/>
</dbReference>
<dbReference type="RefSeq" id="WP_001025313.1">
    <property type="nucleotide sequence ID" value="NC_008253.1"/>
</dbReference>
<dbReference type="SMR" id="Q0TGV6"/>
<dbReference type="KEGG" id="ecp:ECP_1822"/>
<dbReference type="HOGENOM" id="CLU_006406_5_1_6"/>
<dbReference type="Proteomes" id="UP000009182">
    <property type="component" value="Chromosome"/>
</dbReference>
<dbReference type="GO" id="GO:0005737">
    <property type="term" value="C:cytoplasm"/>
    <property type="evidence" value="ECO:0007669"/>
    <property type="project" value="UniProtKB-SubCell"/>
</dbReference>
<dbReference type="GO" id="GO:0004814">
    <property type="term" value="F:arginine-tRNA ligase activity"/>
    <property type="evidence" value="ECO:0007669"/>
    <property type="project" value="UniProtKB-UniRule"/>
</dbReference>
<dbReference type="GO" id="GO:0005524">
    <property type="term" value="F:ATP binding"/>
    <property type="evidence" value="ECO:0007669"/>
    <property type="project" value="UniProtKB-UniRule"/>
</dbReference>
<dbReference type="GO" id="GO:0006420">
    <property type="term" value="P:arginyl-tRNA aminoacylation"/>
    <property type="evidence" value="ECO:0007669"/>
    <property type="project" value="UniProtKB-UniRule"/>
</dbReference>
<dbReference type="CDD" id="cd07956">
    <property type="entry name" value="Anticodon_Ia_Arg"/>
    <property type="match status" value="1"/>
</dbReference>
<dbReference type="CDD" id="cd00671">
    <property type="entry name" value="ArgRS_core"/>
    <property type="match status" value="1"/>
</dbReference>
<dbReference type="FunFam" id="1.10.730.10:FF:000001">
    <property type="entry name" value="Arginine--tRNA ligase"/>
    <property type="match status" value="1"/>
</dbReference>
<dbReference type="FunFam" id="3.30.1360.70:FF:000001">
    <property type="entry name" value="Arginine--tRNA ligase"/>
    <property type="match status" value="1"/>
</dbReference>
<dbReference type="FunFam" id="3.40.50.620:FF:000030">
    <property type="entry name" value="Arginine--tRNA ligase"/>
    <property type="match status" value="1"/>
</dbReference>
<dbReference type="Gene3D" id="3.30.1360.70">
    <property type="entry name" value="Arginyl tRNA synthetase N-terminal domain"/>
    <property type="match status" value="1"/>
</dbReference>
<dbReference type="Gene3D" id="3.40.50.620">
    <property type="entry name" value="HUPs"/>
    <property type="match status" value="1"/>
</dbReference>
<dbReference type="Gene3D" id="1.10.730.10">
    <property type="entry name" value="Isoleucyl-tRNA Synthetase, Domain 1"/>
    <property type="match status" value="1"/>
</dbReference>
<dbReference type="HAMAP" id="MF_00123">
    <property type="entry name" value="Arg_tRNA_synth"/>
    <property type="match status" value="1"/>
</dbReference>
<dbReference type="InterPro" id="IPR001412">
    <property type="entry name" value="aa-tRNA-synth_I_CS"/>
</dbReference>
<dbReference type="InterPro" id="IPR001278">
    <property type="entry name" value="Arg-tRNA-ligase"/>
</dbReference>
<dbReference type="InterPro" id="IPR005148">
    <property type="entry name" value="Arg-tRNA-synth_N"/>
</dbReference>
<dbReference type="InterPro" id="IPR036695">
    <property type="entry name" value="Arg-tRNA-synth_N_sf"/>
</dbReference>
<dbReference type="InterPro" id="IPR035684">
    <property type="entry name" value="ArgRS_core"/>
</dbReference>
<dbReference type="InterPro" id="IPR008909">
    <property type="entry name" value="DALR_anticod-bd"/>
</dbReference>
<dbReference type="InterPro" id="IPR014729">
    <property type="entry name" value="Rossmann-like_a/b/a_fold"/>
</dbReference>
<dbReference type="InterPro" id="IPR009080">
    <property type="entry name" value="tRNAsynth_Ia_anticodon-bd"/>
</dbReference>
<dbReference type="NCBIfam" id="TIGR00456">
    <property type="entry name" value="argS"/>
    <property type="match status" value="1"/>
</dbReference>
<dbReference type="PANTHER" id="PTHR11956:SF5">
    <property type="entry name" value="ARGININE--TRNA LIGASE, CYTOPLASMIC"/>
    <property type="match status" value="1"/>
</dbReference>
<dbReference type="PANTHER" id="PTHR11956">
    <property type="entry name" value="ARGINYL-TRNA SYNTHETASE"/>
    <property type="match status" value="1"/>
</dbReference>
<dbReference type="Pfam" id="PF03485">
    <property type="entry name" value="Arg_tRNA_synt_N"/>
    <property type="match status" value="1"/>
</dbReference>
<dbReference type="Pfam" id="PF05746">
    <property type="entry name" value="DALR_1"/>
    <property type="match status" value="1"/>
</dbReference>
<dbReference type="Pfam" id="PF00750">
    <property type="entry name" value="tRNA-synt_1d"/>
    <property type="match status" value="1"/>
</dbReference>
<dbReference type="PRINTS" id="PR01038">
    <property type="entry name" value="TRNASYNTHARG"/>
</dbReference>
<dbReference type="SMART" id="SM01016">
    <property type="entry name" value="Arg_tRNA_synt_N"/>
    <property type="match status" value="1"/>
</dbReference>
<dbReference type="SMART" id="SM00836">
    <property type="entry name" value="DALR_1"/>
    <property type="match status" value="1"/>
</dbReference>
<dbReference type="SUPFAM" id="SSF47323">
    <property type="entry name" value="Anticodon-binding domain of a subclass of class I aminoacyl-tRNA synthetases"/>
    <property type="match status" value="1"/>
</dbReference>
<dbReference type="SUPFAM" id="SSF55190">
    <property type="entry name" value="Arginyl-tRNA synthetase (ArgRS), N-terminal 'additional' domain"/>
    <property type="match status" value="1"/>
</dbReference>
<dbReference type="SUPFAM" id="SSF52374">
    <property type="entry name" value="Nucleotidylyl transferase"/>
    <property type="match status" value="1"/>
</dbReference>
<dbReference type="PROSITE" id="PS00178">
    <property type="entry name" value="AA_TRNA_LIGASE_I"/>
    <property type="match status" value="1"/>
</dbReference>
<proteinExistence type="inferred from homology"/>